<proteinExistence type="inferred from homology"/>
<gene>
    <name evidence="3" type="primary">SUS1</name>
    <name type="ORF">SCY_0327</name>
</gene>
<organism>
    <name type="scientific">Saccharomyces cerevisiae (strain YJM789)</name>
    <name type="common">Baker's yeast</name>
    <dbReference type="NCBI Taxonomy" id="307796"/>
    <lineage>
        <taxon>Eukaryota</taxon>
        <taxon>Fungi</taxon>
        <taxon>Dikarya</taxon>
        <taxon>Ascomycota</taxon>
        <taxon>Saccharomycotina</taxon>
        <taxon>Saccharomycetes</taxon>
        <taxon>Saccharomycetales</taxon>
        <taxon>Saccharomycetaceae</taxon>
        <taxon>Saccharomyces</taxon>
    </lineage>
</organism>
<accession>A6ZL57</accession>
<protein>
    <recommendedName>
        <fullName evidence="3">Transcription and mRNA export factor SUS1</fullName>
    </recommendedName>
</protein>
<reference key="1">
    <citation type="journal article" date="2007" name="Proc. Natl. Acad. Sci. U.S.A.">
        <title>Genome sequencing and comparative analysis of Saccharomyces cerevisiae strain YJM789.</title>
        <authorList>
            <person name="Wei W."/>
            <person name="McCusker J.H."/>
            <person name="Hyman R.W."/>
            <person name="Jones T."/>
            <person name="Ning Y."/>
            <person name="Cao Z."/>
            <person name="Gu Z."/>
            <person name="Bruno D."/>
            <person name="Miranda M."/>
            <person name="Nguyen M."/>
            <person name="Wilhelmy J."/>
            <person name="Komp C."/>
            <person name="Tamse R."/>
            <person name="Wang X."/>
            <person name="Jia P."/>
            <person name="Luedi P."/>
            <person name="Oefner P.J."/>
            <person name="David L."/>
            <person name="Dietrich F.S."/>
            <person name="Li Y."/>
            <person name="Davis R.W."/>
            <person name="Steinmetz L.M."/>
        </authorList>
    </citation>
    <scope>NUCLEOTIDE SEQUENCE [LARGE SCALE GENOMIC DNA]</scope>
    <source>
        <strain>YJM789</strain>
    </source>
</reference>
<evidence type="ECO:0000250" key="1"/>
<evidence type="ECO:0000250" key="2">
    <source>
        <dbReference type="UniProtKB" id="Q6WNK7"/>
    </source>
</evidence>
<evidence type="ECO:0000255" key="3">
    <source>
        <dbReference type="HAMAP-Rule" id="MF_03046"/>
    </source>
</evidence>
<name>SUS1_YEAS7</name>
<sequence length="96" mass="10994">MTMDTAQLKSQIQQYLVESGNYELISNELKARLLQEGWVDKVKDLTKSEMNINESTNFTQILSTVEPKALEIVSDSTRETVLKQIREFLEGIVDTQ</sequence>
<feature type="chain" id="PRO_0000367574" description="Transcription and mRNA export factor SUS1">
    <location>
        <begin position="1"/>
        <end position="96"/>
    </location>
</feature>
<feature type="cross-link" description="Glycyl lysine isopeptide (Lys-Gly) (interchain with G-Cter in ubiquitin)" evidence="2">
    <location>
        <position position="68"/>
    </location>
</feature>
<dbReference type="EMBL" id="AAFW02000011">
    <property type="protein sequence ID" value="EDN64726.1"/>
    <property type="molecule type" value="Genomic_DNA"/>
</dbReference>
<dbReference type="SMR" id="A6ZL57"/>
<dbReference type="HOGENOM" id="CLU_134052_2_1_1"/>
<dbReference type="Proteomes" id="UP000007060">
    <property type="component" value="Unassembled WGS sequence"/>
</dbReference>
<dbReference type="GO" id="GO:0071819">
    <property type="term" value="C:DUBm complex"/>
    <property type="evidence" value="ECO:0007669"/>
    <property type="project" value="UniProtKB-UniRule"/>
</dbReference>
<dbReference type="GO" id="GO:0005643">
    <property type="term" value="C:nuclear pore"/>
    <property type="evidence" value="ECO:0007669"/>
    <property type="project" value="UniProtKB-UniRule"/>
</dbReference>
<dbReference type="GO" id="GO:0005654">
    <property type="term" value="C:nucleoplasm"/>
    <property type="evidence" value="ECO:0007669"/>
    <property type="project" value="UniProtKB-SubCell"/>
</dbReference>
<dbReference type="GO" id="GO:0000932">
    <property type="term" value="C:P-body"/>
    <property type="evidence" value="ECO:0007669"/>
    <property type="project" value="UniProtKB-SubCell"/>
</dbReference>
<dbReference type="GO" id="GO:0000124">
    <property type="term" value="C:SAGA complex"/>
    <property type="evidence" value="ECO:0007669"/>
    <property type="project" value="UniProtKB-UniRule"/>
</dbReference>
<dbReference type="GO" id="GO:0070390">
    <property type="term" value="C:transcription export complex 2"/>
    <property type="evidence" value="ECO:0007669"/>
    <property type="project" value="UniProtKB-UniRule"/>
</dbReference>
<dbReference type="GO" id="GO:0003713">
    <property type="term" value="F:transcription coactivator activity"/>
    <property type="evidence" value="ECO:0007669"/>
    <property type="project" value="UniProtKB-UniRule"/>
</dbReference>
<dbReference type="GO" id="GO:0006325">
    <property type="term" value="P:chromatin organization"/>
    <property type="evidence" value="ECO:0007669"/>
    <property type="project" value="UniProtKB-KW"/>
</dbReference>
<dbReference type="GO" id="GO:0006406">
    <property type="term" value="P:mRNA export from nucleus"/>
    <property type="evidence" value="ECO:0007669"/>
    <property type="project" value="UniProtKB-UniRule"/>
</dbReference>
<dbReference type="GO" id="GO:0015031">
    <property type="term" value="P:protein transport"/>
    <property type="evidence" value="ECO:0007669"/>
    <property type="project" value="UniProtKB-KW"/>
</dbReference>
<dbReference type="GO" id="GO:0006368">
    <property type="term" value="P:transcription elongation by RNA polymerase II"/>
    <property type="evidence" value="ECO:0007669"/>
    <property type="project" value="UniProtKB-UniRule"/>
</dbReference>
<dbReference type="FunFam" id="1.10.246.140:FF:000004">
    <property type="entry name" value="Transcription and mRNA export factor SUS1"/>
    <property type="match status" value="1"/>
</dbReference>
<dbReference type="Gene3D" id="1.10.246.140">
    <property type="match status" value="1"/>
</dbReference>
<dbReference type="HAMAP" id="MF_03046">
    <property type="entry name" value="ENY2_Sus1"/>
    <property type="match status" value="1"/>
</dbReference>
<dbReference type="InterPro" id="IPR018783">
    <property type="entry name" value="TF_ENY2"/>
</dbReference>
<dbReference type="InterPro" id="IPR038212">
    <property type="entry name" value="TF_EnY2_sf"/>
</dbReference>
<dbReference type="PANTHER" id="PTHR12514">
    <property type="entry name" value="ENHANCER OF YELLOW 2 TRANSCRIPTION FACTOR"/>
    <property type="match status" value="1"/>
</dbReference>
<dbReference type="Pfam" id="PF10163">
    <property type="entry name" value="EnY2"/>
    <property type="match status" value="1"/>
</dbReference>
<keyword id="KW-0010">Activator</keyword>
<keyword id="KW-0156">Chromatin regulator</keyword>
<keyword id="KW-0963">Cytoplasm</keyword>
<keyword id="KW-1017">Isopeptide bond</keyword>
<keyword id="KW-0509">mRNA transport</keyword>
<keyword id="KW-0539">Nucleus</keyword>
<keyword id="KW-0653">Protein transport</keyword>
<keyword id="KW-0804">Transcription</keyword>
<keyword id="KW-0805">Transcription regulation</keyword>
<keyword id="KW-0811">Translocation</keyword>
<keyword id="KW-0813">Transport</keyword>
<keyword id="KW-0832">Ubl conjugation</keyword>
<comment type="function">
    <text evidence="1">Involved in mRNA export coupled transcription activation by association with both the TREX-2 and the SAGA complexes. At the promoters, SAGA is required for recruitment of the basal transcription machinery. It influences RNA polymerase II transcriptional activity through different activities such as TBP interaction and promoter selectivity, interaction with transcription activators, and chromatin modification through histone acetylation and deubiquitination. Within the SAGA complex, participates in a subcomplex required for deubiquitination of H2B and for the maintenance of steady-state H3 methylation levels. The TREX-2 complex functions in docking export-competent ribonucleoprotein particles (mRNPs) to the nuclear entrance of the nuclear pore complex (nuclear basket). TREX-2 participates in mRNA export and accurate chromatin positioning in the nucleus by tethering genes to the nuclear periphery. May also be involved in cytoplasmic mRNA decay by interaction with components of P-bodies (By similarity).</text>
</comment>
<comment type="subunit">
    <text evidence="3">Component of the nuclear pore complex (NPC)-associated TREX-2 complex (transcription and export complex 2), composed of at least SUS1, SAC3, THP1, SEM1, and CDC31. TREX-2 contains 2 SUS1 chains. The TREX-2 complex interacts with the nucleoporin NUP1. Component of the 1.8 MDa SAGA transcription coactivator-HAT complex. SAGA is built of 5 distinct domains with specialized functions. Within the SAGA complex, SUS1, SGF11, SGF73 and UBP8 form an additional subcomplex of SAGA called the DUB module (deubiquitination module). Interacts directly with THP1, SAC3, SGF11, and with the RNA polymerase II.</text>
</comment>
<comment type="subcellular location">
    <subcellularLocation>
        <location evidence="3">Nucleus</location>
        <location evidence="3">Nucleoplasm</location>
    </subcellularLocation>
    <subcellularLocation>
        <location evidence="3">Cytoplasm</location>
        <location evidence="3">P-body</location>
    </subcellularLocation>
</comment>
<comment type="similarity">
    <text evidence="3">Belongs to the ENY2 family.</text>
</comment>